<comment type="function">
    <text evidence="1">One of several proteins that assist in the late maturation steps of the functional core of the 30S ribosomal subunit. Associates with free 30S ribosomal subunits (but not with 30S subunits that are part of 70S ribosomes or polysomes). Required for efficient processing of 16S rRNA. May interact with the 5'-terminal helix region of 16S rRNA.</text>
</comment>
<comment type="subunit">
    <text evidence="1">Monomer. Binds 30S ribosomal subunits, but not 50S ribosomal subunits or 70S ribosomes.</text>
</comment>
<comment type="subcellular location">
    <subcellularLocation>
        <location evidence="1">Cytoplasm</location>
    </subcellularLocation>
</comment>
<comment type="similarity">
    <text evidence="1">Belongs to the RbfA family.</text>
</comment>
<name>RBFA_ECO24</name>
<dbReference type="EMBL" id="CP000800">
    <property type="protein sequence ID" value="ABV16687.1"/>
    <property type="molecule type" value="Genomic_DNA"/>
</dbReference>
<dbReference type="RefSeq" id="WP_001040205.1">
    <property type="nucleotide sequence ID" value="NC_009801.1"/>
</dbReference>
<dbReference type="BMRB" id="A7ZS64"/>
<dbReference type="SMR" id="A7ZS64"/>
<dbReference type="GeneID" id="93778816"/>
<dbReference type="KEGG" id="ecw:EcE24377A_3651"/>
<dbReference type="HOGENOM" id="CLU_089475_5_0_6"/>
<dbReference type="Proteomes" id="UP000001122">
    <property type="component" value="Chromosome"/>
</dbReference>
<dbReference type="GO" id="GO:0005829">
    <property type="term" value="C:cytosol"/>
    <property type="evidence" value="ECO:0007669"/>
    <property type="project" value="TreeGrafter"/>
</dbReference>
<dbReference type="GO" id="GO:0043024">
    <property type="term" value="F:ribosomal small subunit binding"/>
    <property type="evidence" value="ECO:0007669"/>
    <property type="project" value="TreeGrafter"/>
</dbReference>
<dbReference type="GO" id="GO:0030490">
    <property type="term" value="P:maturation of SSU-rRNA"/>
    <property type="evidence" value="ECO:0007669"/>
    <property type="project" value="UniProtKB-UniRule"/>
</dbReference>
<dbReference type="FunFam" id="3.30.300.20:FF:000007">
    <property type="entry name" value="Ribosome-binding factor A"/>
    <property type="match status" value="1"/>
</dbReference>
<dbReference type="Gene3D" id="3.30.300.20">
    <property type="match status" value="1"/>
</dbReference>
<dbReference type="HAMAP" id="MF_00003">
    <property type="entry name" value="RbfA"/>
    <property type="match status" value="1"/>
</dbReference>
<dbReference type="InterPro" id="IPR015946">
    <property type="entry name" value="KH_dom-like_a/b"/>
</dbReference>
<dbReference type="InterPro" id="IPR000238">
    <property type="entry name" value="RbfA"/>
</dbReference>
<dbReference type="InterPro" id="IPR023799">
    <property type="entry name" value="RbfA_dom_sf"/>
</dbReference>
<dbReference type="InterPro" id="IPR020053">
    <property type="entry name" value="Ribosome-bd_factorA_CS"/>
</dbReference>
<dbReference type="NCBIfam" id="TIGR00082">
    <property type="entry name" value="rbfA"/>
    <property type="match status" value="1"/>
</dbReference>
<dbReference type="PANTHER" id="PTHR33515">
    <property type="entry name" value="RIBOSOME-BINDING FACTOR A, CHLOROPLASTIC-RELATED"/>
    <property type="match status" value="1"/>
</dbReference>
<dbReference type="PANTHER" id="PTHR33515:SF1">
    <property type="entry name" value="RIBOSOME-BINDING FACTOR A, CHLOROPLASTIC-RELATED"/>
    <property type="match status" value="1"/>
</dbReference>
<dbReference type="Pfam" id="PF02033">
    <property type="entry name" value="RBFA"/>
    <property type="match status" value="1"/>
</dbReference>
<dbReference type="SUPFAM" id="SSF89919">
    <property type="entry name" value="Ribosome-binding factor A, RbfA"/>
    <property type="match status" value="1"/>
</dbReference>
<dbReference type="PROSITE" id="PS01319">
    <property type="entry name" value="RBFA"/>
    <property type="match status" value="1"/>
</dbReference>
<organism>
    <name type="scientific">Escherichia coli O139:H28 (strain E24377A / ETEC)</name>
    <dbReference type="NCBI Taxonomy" id="331111"/>
    <lineage>
        <taxon>Bacteria</taxon>
        <taxon>Pseudomonadati</taxon>
        <taxon>Pseudomonadota</taxon>
        <taxon>Gammaproteobacteria</taxon>
        <taxon>Enterobacterales</taxon>
        <taxon>Enterobacteriaceae</taxon>
        <taxon>Escherichia</taxon>
    </lineage>
</organism>
<reference key="1">
    <citation type="journal article" date="2008" name="J. Bacteriol.">
        <title>The pangenome structure of Escherichia coli: comparative genomic analysis of E. coli commensal and pathogenic isolates.</title>
        <authorList>
            <person name="Rasko D.A."/>
            <person name="Rosovitz M.J."/>
            <person name="Myers G.S.A."/>
            <person name="Mongodin E.F."/>
            <person name="Fricke W.F."/>
            <person name="Gajer P."/>
            <person name="Crabtree J."/>
            <person name="Sebaihia M."/>
            <person name="Thomson N.R."/>
            <person name="Chaudhuri R."/>
            <person name="Henderson I.R."/>
            <person name="Sperandio V."/>
            <person name="Ravel J."/>
        </authorList>
    </citation>
    <scope>NUCLEOTIDE SEQUENCE [LARGE SCALE GENOMIC DNA]</scope>
    <source>
        <strain>E24377A / ETEC</strain>
    </source>
</reference>
<accession>A7ZS64</accession>
<sequence>MAKEFGRPQRVAQEMQKEIALILQREIKDPRLGMMTTVSGVEMSRDLAYAKVYVTFLNDKDEDAVKAGIKALQEASGFIRSLLGKAMRLRIVPELTFFYDNSLVEGMRMSNLVTSVVKHDEERRVNPDDSKED</sequence>
<gene>
    <name evidence="1" type="primary">rbfA</name>
    <name type="ordered locus">EcE24377A_3651</name>
</gene>
<feature type="chain" id="PRO_1000057020" description="Ribosome-binding factor A">
    <location>
        <begin position="1"/>
        <end position="133"/>
    </location>
</feature>
<evidence type="ECO:0000255" key="1">
    <source>
        <dbReference type="HAMAP-Rule" id="MF_00003"/>
    </source>
</evidence>
<keyword id="KW-0963">Cytoplasm</keyword>
<keyword id="KW-1185">Reference proteome</keyword>
<keyword id="KW-0690">Ribosome biogenesis</keyword>
<protein>
    <recommendedName>
        <fullName evidence="1">Ribosome-binding factor A</fullName>
    </recommendedName>
</protein>
<proteinExistence type="inferred from homology"/>